<accession>P66191</accession>
<accession>Q8XGL1</accession>
<proteinExistence type="inferred from homology"/>
<protein>
    <recommendedName>
        <fullName evidence="1">Large ribosomal subunit protein bL31</fullName>
    </recommendedName>
    <alternativeName>
        <fullName evidence="2">50S ribosomal protein L31</fullName>
    </alternativeName>
</protein>
<evidence type="ECO:0000255" key="1">
    <source>
        <dbReference type="HAMAP-Rule" id="MF_00501"/>
    </source>
</evidence>
<evidence type="ECO:0000305" key="2"/>
<dbReference type="EMBL" id="AE006468">
    <property type="protein sequence ID" value="AAL22936.1"/>
    <property type="molecule type" value="Genomic_DNA"/>
</dbReference>
<dbReference type="RefSeq" id="NP_462977.1">
    <property type="nucleotide sequence ID" value="NC_003197.2"/>
</dbReference>
<dbReference type="RefSeq" id="WP_000715284.1">
    <property type="nucleotide sequence ID" value="NC_003197.2"/>
</dbReference>
<dbReference type="SMR" id="P66191"/>
<dbReference type="STRING" id="99287.STM4096"/>
<dbReference type="PaxDb" id="99287-STM4096"/>
<dbReference type="GeneID" id="1255623"/>
<dbReference type="GeneID" id="66758349"/>
<dbReference type="KEGG" id="stm:STM4096"/>
<dbReference type="PATRIC" id="fig|99287.12.peg.4317"/>
<dbReference type="HOGENOM" id="CLU_114306_4_3_6"/>
<dbReference type="OMA" id="IHVDVWS"/>
<dbReference type="PhylomeDB" id="P66191"/>
<dbReference type="BioCyc" id="SENT99287:STM4096-MONOMER"/>
<dbReference type="PRO" id="PR:P66191"/>
<dbReference type="Proteomes" id="UP000001014">
    <property type="component" value="Chromosome"/>
</dbReference>
<dbReference type="GO" id="GO:1990904">
    <property type="term" value="C:ribonucleoprotein complex"/>
    <property type="evidence" value="ECO:0007669"/>
    <property type="project" value="UniProtKB-KW"/>
</dbReference>
<dbReference type="GO" id="GO:0005840">
    <property type="term" value="C:ribosome"/>
    <property type="evidence" value="ECO:0007669"/>
    <property type="project" value="UniProtKB-KW"/>
</dbReference>
<dbReference type="GO" id="GO:0046872">
    <property type="term" value="F:metal ion binding"/>
    <property type="evidence" value="ECO:0007669"/>
    <property type="project" value="UniProtKB-KW"/>
</dbReference>
<dbReference type="GO" id="GO:0019843">
    <property type="term" value="F:rRNA binding"/>
    <property type="evidence" value="ECO:0007669"/>
    <property type="project" value="UniProtKB-KW"/>
</dbReference>
<dbReference type="GO" id="GO:0003735">
    <property type="term" value="F:structural constituent of ribosome"/>
    <property type="evidence" value="ECO:0007669"/>
    <property type="project" value="InterPro"/>
</dbReference>
<dbReference type="GO" id="GO:0006412">
    <property type="term" value="P:translation"/>
    <property type="evidence" value="ECO:0007669"/>
    <property type="project" value="UniProtKB-UniRule"/>
</dbReference>
<dbReference type="FunFam" id="4.10.830.30:FF:000001">
    <property type="entry name" value="50S ribosomal protein L31"/>
    <property type="match status" value="1"/>
</dbReference>
<dbReference type="Gene3D" id="4.10.830.30">
    <property type="entry name" value="Ribosomal protein L31"/>
    <property type="match status" value="1"/>
</dbReference>
<dbReference type="HAMAP" id="MF_00501">
    <property type="entry name" value="Ribosomal_bL31_1"/>
    <property type="match status" value="1"/>
</dbReference>
<dbReference type="InterPro" id="IPR034704">
    <property type="entry name" value="Ribosomal_bL28/bL31-like_sf"/>
</dbReference>
<dbReference type="InterPro" id="IPR002150">
    <property type="entry name" value="Ribosomal_bL31"/>
</dbReference>
<dbReference type="InterPro" id="IPR027491">
    <property type="entry name" value="Ribosomal_bL31_A"/>
</dbReference>
<dbReference type="InterPro" id="IPR042105">
    <property type="entry name" value="Ribosomal_bL31_sf"/>
</dbReference>
<dbReference type="NCBIfam" id="TIGR00105">
    <property type="entry name" value="L31"/>
    <property type="match status" value="1"/>
</dbReference>
<dbReference type="NCBIfam" id="NF000612">
    <property type="entry name" value="PRK00019.1"/>
    <property type="match status" value="1"/>
</dbReference>
<dbReference type="NCBIfam" id="NF001809">
    <property type="entry name" value="PRK00528.1"/>
    <property type="match status" value="1"/>
</dbReference>
<dbReference type="PANTHER" id="PTHR33280">
    <property type="entry name" value="50S RIBOSOMAL PROTEIN L31, CHLOROPLASTIC"/>
    <property type="match status" value="1"/>
</dbReference>
<dbReference type="PANTHER" id="PTHR33280:SF6">
    <property type="entry name" value="LARGE RIBOSOMAL SUBUNIT PROTEIN BL31A"/>
    <property type="match status" value="1"/>
</dbReference>
<dbReference type="Pfam" id="PF01197">
    <property type="entry name" value="Ribosomal_L31"/>
    <property type="match status" value="1"/>
</dbReference>
<dbReference type="PRINTS" id="PR01249">
    <property type="entry name" value="RIBOSOMALL31"/>
</dbReference>
<dbReference type="SUPFAM" id="SSF143800">
    <property type="entry name" value="L28p-like"/>
    <property type="match status" value="1"/>
</dbReference>
<dbReference type="PROSITE" id="PS01143">
    <property type="entry name" value="RIBOSOMAL_L31"/>
    <property type="match status" value="1"/>
</dbReference>
<keyword id="KW-0479">Metal-binding</keyword>
<keyword id="KW-1185">Reference proteome</keyword>
<keyword id="KW-0687">Ribonucleoprotein</keyword>
<keyword id="KW-0689">Ribosomal protein</keyword>
<keyword id="KW-0694">RNA-binding</keyword>
<keyword id="KW-0699">rRNA-binding</keyword>
<keyword id="KW-0862">Zinc</keyword>
<sequence>MKKGIHPNYVEITATCSCGNVIKTHSTVGHDLNLDVCGKCHPFFTGKQRVVDTGGRVERFNKRFSIPGSK</sequence>
<name>RL31_SALTY</name>
<reference key="1">
    <citation type="journal article" date="2001" name="Nature">
        <title>Complete genome sequence of Salmonella enterica serovar Typhimurium LT2.</title>
        <authorList>
            <person name="McClelland M."/>
            <person name="Sanderson K.E."/>
            <person name="Spieth J."/>
            <person name="Clifton S.W."/>
            <person name="Latreille P."/>
            <person name="Courtney L."/>
            <person name="Porwollik S."/>
            <person name="Ali J."/>
            <person name="Dante M."/>
            <person name="Du F."/>
            <person name="Hou S."/>
            <person name="Layman D."/>
            <person name="Leonard S."/>
            <person name="Nguyen C."/>
            <person name="Scott K."/>
            <person name="Holmes A."/>
            <person name="Grewal N."/>
            <person name="Mulvaney E."/>
            <person name="Ryan E."/>
            <person name="Sun H."/>
            <person name="Florea L."/>
            <person name="Miller W."/>
            <person name="Stoneking T."/>
            <person name="Nhan M."/>
            <person name="Waterston R."/>
            <person name="Wilson R.K."/>
        </authorList>
    </citation>
    <scope>NUCLEOTIDE SEQUENCE [LARGE SCALE GENOMIC DNA]</scope>
    <source>
        <strain>LT2 / SGSC1412 / ATCC 700720</strain>
    </source>
</reference>
<feature type="chain" id="PRO_0000173158" description="Large ribosomal subunit protein bL31">
    <location>
        <begin position="1"/>
        <end position="70"/>
    </location>
</feature>
<feature type="binding site" evidence="1">
    <location>
        <position position="16"/>
    </location>
    <ligand>
        <name>Zn(2+)</name>
        <dbReference type="ChEBI" id="CHEBI:29105"/>
    </ligand>
</feature>
<feature type="binding site" evidence="1">
    <location>
        <position position="18"/>
    </location>
    <ligand>
        <name>Zn(2+)</name>
        <dbReference type="ChEBI" id="CHEBI:29105"/>
    </ligand>
</feature>
<feature type="binding site" evidence="1">
    <location>
        <position position="37"/>
    </location>
    <ligand>
        <name>Zn(2+)</name>
        <dbReference type="ChEBI" id="CHEBI:29105"/>
    </ligand>
</feature>
<feature type="binding site" evidence="1">
    <location>
        <position position="40"/>
    </location>
    <ligand>
        <name>Zn(2+)</name>
        <dbReference type="ChEBI" id="CHEBI:29105"/>
    </ligand>
</feature>
<comment type="function">
    <text evidence="1">Binds the 23S rRNA.</text>
</comment>
<comment type="cofactor">
    <cofactor evidence="1">
        <name>Zn(2+)</name>
        <dbReference type="ChEBI" id="CHEBI:29105"/>
    </cofactor>
    <text evidence="1">Binds 1 zinc ion per subunit.</text>
</comment>
<comment type="subunit">
    <text evidence="1">Part of the 50S ribosomal subunit.</text>
</comment>
<comment type="similarity">
    <text evidence="1">Belongs to the bacterial ribosomal protein bL31 family. Type A subfamily.</text>
</comment>
<organism>
    <name type="scientific">Salmonella typhimurium (strain LT2 / SGSC1412 / ATCC 700720)</name>
    <dbReference type="NCBI Taxonomy" id="99287"/>
    <lineage>
        <taxon>Bacteria</taxon>
        <taxon>Pseudomonadati</taxon>
        <taxon>Pseudomonadota</taxon>
        <taxon>Gammaproteobacteria</taxon>
        <taxon>Enterobacterales</taxon>
        <taxon>Enterobacteriaceae</taxon>
        <taxon>Salmonella</taxon>
    </lineage>
</organism>
<gene>
    <name evidence="1" type="primary">rpmE</name>
    <name type="ordered locus">STM4096</name>
</gene>